<feature type="chain" id="PRO_1000040540" description="6,7-dimethyl-8-ribityllumazine synthase">
    <location>
        <begin position="1"/>
        <end position="157"/>
    </location>
</feature>
<feature type="active site" description="Proton donor" evidence="1">
    <location>
        <position position="90"/>
    </location>
</feature>
<feature type="binding site" evidence="1">
    <location>
        <position position="24"/>
    </location>
    <ligand>
        <name>5-amino-6-(D-ribitylamino)uracil</name>
        <dbReference type="ChEBI" id="CHEBI:15934"/>
    </ligand>
</feature>
<feature type="binding site" evidence="1">
    <location>
        <begin position="58"/>
        <end position="60"/>
    </location>
    <ligand>
        <name>5-amino-6-(D-ribitylamino)uracil</name>
        <dbReference type="ChEBI" id="CHEBI:15934"/>
    </ligand>
</feature>
<feature type="binding site" evidence="1">
    <location>
        <begin position="82"/>
        <end position="84"/>
    </location>
    <ligand>
        <name>5-amino-6-(D-ribitylamino)uracil</name>
        <dbReference type="ChEBI" id="CHEBI:15934"/>
    </ligand>
</feature>
<feature type="binding site" evidence="1">
    <location>
        <begin position="87"/>
        <end position="88"/>
    </location>
    <ligand>
        <name>(2S)-2-hydroxy-3-oxobutyl phosphate</name>
        <dbReference type="ChEBI" id="CHEBI:58830"/>
    </ligand>
</feature>
<feature type="binding site" evidence="1">
    <location>
        <position position="115"/>
    </location>
    <ligand>
        <name>5-amino-6-(D-ribitylamino)uracil</name>
        <dbReference type="ChEBI" id="CHEBI:15934"/>
    </ligand>
</feature>
<feature type="binding site" evidence="1">
    <location>
        <position position="129"/>
    </location>
    <ligand>
        <name>(2S)-2-hydroxy-3-oxobutyl phosphate</name>
        <dbReference type="ChEBI" id="CHEBI:58830"/>
    </ligand>
</feature>
<proteinExistence type="inferred from homology"/>
<accession>Q5SLF7</accession>
<comment type="function">
    <text evidence="1">Catalyzes the formation of 6,7-dimethyl-8-ribityllumazine by condensation of 5-amino-6-(D-ribitylamino)uracil with 3,4-dihydroxy-2-butanone 4-phosphate. This is the penultimate step in the biosynthesis of riboflavin.</text>
</comment>
<comment type="catalytic activity">
    <reaction evidence="1">
        <text>(2S)-2-hydroxy-3-oxobutyl phosphate + 5-amino-6-(D-ribitylamino)uracil = 6,7-dimethyl-8-(1-D-ribityl)lumazine + phosphate + 2 H2O + H(+)</text>
        <dbReference type="Rhea" id="RHEA:26152"/>
        <dbReference type="ChEBI" id="CHEBI:15377"/>
        <dbReference type="ChEBI" id="CHEBI:15378"/>
        <dbReference type="ChEBI" id="CHEBI:15934"/>
        <dbReference type="ChEBI" id="CHEBI:43474"/>
        <dbReference type="ChEBI" id="CHEBI:58201"/>
        <dbReference type="ChEBI" id="CHEBI:58830"/>
        <dbReference type="EC" id="2.5.1.78"/>
    </reaction>
</comment>
<comment type="pathway">
    <text evidence="1">Cofactor biosynthesis; riboflavin biosynthesis; riboflavin from 2-hydroxy-3-oxobutyl phosphate and 5-amino-6-(D-ribitylamino)uracil: step 1/2.</text>
</comment>
<comment type="similarity">
    <text evidence="1">Belongs to the DMRL synthase family.</text>
</comment>
<protein>
    <recommendedName>
        <fullName evidence="1">6,7-dimethyl-8-ribityllumazine synthase</fullName>
        <shortName evidence="1">DMRL synthase</shortName>
        <shortName evidence="1">LS</shortName>
        <shortName evidence="1">Lumazine synthase</shortName>
        <ecNumber evidence="1">2.5.1.78</ecNumber>
    </recommendedName>
</protein>
<evidence type="ECO:0000255" key="1">
    <source>
        <dbReference type="HAMAP-Rule" id="MF_00178"/>
    </source>
</evidence>
<gene>
    <name evidence="1" type="primary">ribH</name>
    <name type="ordered locus">TTHA0336</name>
</gene>
<keyword id="KW-1185">Reference proteome</keyword>
<keyword id="KW-0686">Riboflavin biosynthesis</keyword>
<keyword id="KW-0808">Transferase</keyword>
<reference key="1">
    <citation type="submission" date="2004-11" db="EMBL/GenBank/DDBJ databases">
        <title>Complete genome sequence of Thermus thermophilus HB8.</title>
        <authorList>
            <person name="Masui R."/>
            <person name="Kurokawa K."/>
            <person name="Nakagawa N."/>
            <person name="Tokunaga F."/>
            <person name="Koyama Y."/>
            <person name="Shibata T."/>
            <person name="Oshima T."/>
            <person name="Yokoyama S."/>
            <person name="Yasunaga T."/>
            <person name="Kuramitsu S."/>
        </authorList>
    </citation>
    <scope>NUCLEOTIDE SEQUENCE [LARGE SCALE GENOMIC DNA]</scope>
    <source>
        <strain>ATCC 27634 / DSM 579 / HB8</strain>
    </source>
</reference>
<name>RISB_THET8</name>
<dbReference type="EC" id="2.5.1.78" evidence="1"/>
<dbReference type="EMBL" id="AP008226">
    <property type="protein sequence ID" value="BAD70159.1"/>
    <property type="molecule type" value="Genomic_DNA"/>
</dbReference>
<dbReference type="RefSeq" id="WP_008634050.1">
    <property type="nucleotide sequence ID" value="NC_006461.1"/>
</dbReference>
<dbReference type="RefSeq" id="YP_143602.1">
    <property type="nucleotide sequence ID" value="NC_006461.1"/>
</dbReference>
<dbReference type="SMR" id="Q5SLF7"/>
<dbReference type="EnsemblBacteria" id="BAD70159">
    <property type="protein sequence ID" value="BAD70159"/>
    <property type="gene ID" value="BAD70159"/>
</dbReference>
<dbReference type="GeneID" id="3168665"/>
<dbReference type="KEGG" id="ttj:TTHA0336"/>
<dbReference type="PATRIC" id="fig|300852.9.peg.336"/>
<dbReference type="eggNOG" id="COG0054">
    <property type="taxonomic scope" value="Bacteria"/>
</dbReference>
<dbReference type="HOGENOM" id="CLU_089358_1_1_0"/>
<dbReference type="PhylomeDB" id="Q5SLF7"/>
<dbReference type="UniPathway" id="UPA00275">
    <property type="reaction ID" value="UER00404"/>
</dbReference>
<dbReference type="Proteomes" id="UP000000532">
    <property type="component" value="Chromosome"/>
</dbReference>
<dbReference type="GO" id="GO:0009349">
    <property type="term" value="C:riboflavin synthase complex"/>
    <property type="evidence" value="ECO:0007669"/>
    <property type="project" value="InterPro"/>
</dbReference>
<dbReference type="GO" id="GO:0000906">
    <property type="term" value="F:6,7-dimethyl-8-ribityllumazine synthase activity"/>
    <property type="evidence" value="ECO:0007669"/>
    <property type="project" value="UniProtKB-UniRule"/>
</dbReference>
<dbReference type="GO" id="GO:0009231">
    <property type="term" value="P:riboflavin biosynthetic process"/>
    <property type="evidence" value="ECO:0007669"/>
    <property type="project" value="UniProtKB-UniRule"/>
</dbReference>
<dbReference type="CDD" id="cd09209">
    <property type="entry name" value="Lumazine_synthase-I"/>
    <property type="match status" value="1"/>
</dbReference>
<dbReference type="Gene3D" id="3.40.50.960">
    <property type="entry name" value="Lumazine/riboflavin synthase"/>
    <property type="match status" value="1"/>
</dbReference>
<dbReference type="HAMAP" id="MF_00178">
    <property type="entry name" value="Lumazine_synth"/>
    <property type="match status" value="1"/>
</dbReference>
<dbReference type="InterPro" id="IPR034964">
    <property type="entry name" value="LS"/>
</dbReference>
<dbReference type="InterPro" id="IPR002180">
    <property type="entry name" value="LS/RS"/>
</dbReference>
<dbReference type="InterPro" id="IPR036467">
    <property type="entry name" value="LS/RS_sf"/>
</dbReference>
<dbReference type="NCBIfam" id="TIGR00114">
    <property type="entry name" value="lumazine-synth"/>
    <property type="match status" value="1"/>
</dbReference>
<dbReference type="PANTHER" id="PTHR21058:SF0">
    <property type="entry name" value="6,7-DIMETHYL-8-RIBITYLLUMAZINE SYNTHASE"/>
    <property type="match status" value="1"/>
</dbReference>
<dbReference type="PANTHER" id="PTHR21058">
    <property type="entry name" value="6,7-DIMETHYL-8-RIBITYLLUMAZINE SYNTHASE DMRL SYNTHASE LUMAZINE SYNTHASE"/>
    <property type="match status" value="1"/>
</dbReference>
<dbReference type="Pfam" id="PF00885">
    <property type="entry name" value="DMRL_synthase"/>
    <property type="match status" value="1"/>
</dbReference>
<dbReference type="SUPFAM" id="SSF52121">
    <property type="entry name" value="Lumazine synthase"/>
    <property type="match status" value="1"/>
</dbReference>
<sequence>MKPKTLSPILTAKGVRLAIAVGRFNERVTKLLLEGALEAYARLGGDPAEVLVAWVPGSFELPLVAKRLAQRPDVDAVVALGAVIRGETPHFEYVAGQAASGLMQAMLQTEKPIVFGVLTTNTPEEAQERAGGKAGNKGAEAVFTAIEMVRLLEAISR</sequence>
<organism>
    <name type="scientific">Thermus thermophilus (strain ATCC 27634 / DSM 579 / HB8)</name>
    <dbReference type="NCBI Taxonomy" id="300852"/>
    <lineage>
        <taxon>Bacteria</taxon>
        <taxon>Thermotogati</taxon>
        <taxon>Deinococcota</taxon>
        <taxon>Deinococci</taxon>
        <taxon>Thermales</taxon>
        <taxon>Thermaceae</taxon>
        <taxon>Thermus</taxon>
    </lineage>
</organism>